<proteinExistence type="inferred from homology"/>
<accession>B7KBV6</accession>
<dbReference type="EC" id="1.17.1.8" evidence="1"/>
<dbReference type="EMBL" id="CP001291">
    <property type="protein sequence ID" value="ACK68779.1"/>
    <property type="molecule type" value="Genomic_DNA"/>
</dbReference>
<dbReference type="RefSeq" id="WP_012597729.1">
    <property type="nucleotide sequence ID" value="NC_011729.1"/>
</dbReference>
<dbReference type="SMR" id="B7KBV6"/>
<dbReference type="STRING" id="65393.PCC7424_0311"/>
<dbReference type="KEGG" id="cyc:PCC7424_0311"/>
<dbReference type="eggNOG" id="COG0289">
    <property type="taxonomic scope" value="Bacteria"/>
</dbReference>
<dbReference type="HOGENOM" id="CLU_047479_0_1_3"/>
<dbReference type="OrthoDB" id="9790352at2"/>
<dbReference type="UniPathway" id="UPA00034">
    <property type="reaction ID" value="UER00018"/>
</dbReference>
<dbReference type="Proteomes" id="UP000002384">
    <property type="component" value="Chromosome"/>
</dbReference>
<dbReference type="GO" id="GO:0005829">
    <property type="term" value="C:cytosol"/>
    <property type="evidence" value="ECO:0007669"/>
    <property type="project" value="TreeGrafter"/>
</dbReference>
<dbReference type="GO" id="GO:0008839">
    <property type="term" value="F:4-hydroxy-tetrahydrodipicolinate reductase"/>
    <property type="evidence" value="ECO:0007669"/>
    <property type="project" value="UniProtKB-EC"/>
</dbReference>
<dbReference type="GO" id="GO:0051287">
    <property type="term" value="F:NAD binding"/>
    <property type="evidence" value="ECO:0007669"/>
    <property type="project" value="UniProtKB-UniRule"/>
</dbReference>
<dbReference type="GO" id="GO:0050661">
    <property type="term" value="F:NADP binding"/>
    <property type="evidence" value="ECO:0007669"/>
    <property type="project" value="UniProtKB-UniRule"/>
</dbReference>
<dbReference type="GO" id="GO:0016726">
    <property type="term" value="F:oxidoreductase activity, acting on CH or CH2 groups, NAD or NADP as acceptor"/>
    <property type="evidence" value="ECO:0007669"/>
    <property type="project" value="UniProtKB-UniRule"/>
</dbReference>
<dbReference type="GO" id="GO:0019877">
    <property type="term" value="P:diaminopimelate biosynthetic process"/>
    <property type="evidence" value="ECO:0007669"/>
    <property type="project" value="UniProtKB-UniRule"/>
</dbReference>
<dbReference type="GO" id="GO:0009089">
    <property type="term" value="P:lysine biosynthetic process via diaminopimelate"/>
    <property type="evidence" value="ECO:0007669"/>
    <property type="project" value="UniProtKB-UniRule"/>
</dbReference>
<dbReference type="CDD" id="cd02274">
    <property type="entry name" value="DHDPR_N"/>
    <property type="match status" value="1"/>
</dbReference>
<dbReference type="FunFam" id="3.30.360.10:FF:000009">
    <property type="entry name" value="4-hydroxy-tetrahydrodipicolinate reductase"/>
    <property type="match status" value="1"/>
</dbReference>
<dbReference type="Gene3D" id="3.30.360.10">
    <property type="entry name" value="Dihydrodipicolinate Reductase, domain 2"/>
    <property type="match status" value="1"/>
</dbReference>
<dbReference type="Gene3D" id="3.40.50.720">
    <property type="entry name" value="NAD(P)-binding Rossmann-like Domain"/>
    <property type="match status" value="1"/>
</dbReference>
<dbReference type="HAMAP" id="MF_00102">
    <property type="entry name" value="DapB"/>
    <property type="match status" value="1"/>
</dbReference>
<dbReference type="InterPro" id="IPR022663">
    <property type="entry name" value="DapB_C"/>
</dbReference>
<dbReference type="InterPro" id="IPR000846">
    <property type="entry name" value="DapB_N"/>
</dbReference>
<dbReference type="InterPro" id="IPR022664">
    <property type="entry name" value="DapB_N_CS"/>
</dbReference>
<dbReference type="InterPro" id="IPR023940">
    <property type="entry name" value="DHDPR_bac"/>
</dbReference>
<dbReference type="InterPro" id="IPR036291">
    <property type="entry name" value="NAD(P)-bd_dom_sf"/>
</dbReference>
<dbReference type="NCBIfam" id="TIGR00036">
    <property type="entry name" value="dapB"/>
    <property type="match status" value="1"/>
</dbReference>
<dbReference type="PANTHER" id="PTHR20836:SF0">
    <property type="entry name" value="4-HYDROXY-TETRAHYDRODIPICOLINATE REDUCTASE 1, CHLOROPLASTIC-RELATED"/>
    <property type="match status" value="1"/>
</dbReference>
<dbReference type="PANTHER" id="PTHR20836">
    <property type="entry name" value="DIHYDRODIPICOLINATE REDUCTASE"/>
    <property type="match status" value="1"/>
</dbReference>
<dbReference type="Pfam" id="PF05173">
    <property type="entry name" value="DapB_C"/>
    <property type="match status" value="1"/>
</dbReference>
<dbReference type="Pfam" id="PF01113">
    <property type="entry name" value="DapB_N"/>
    <property type="match status" value="1"/>
</dbReference>
<dbReference type="PIRSF" id="PIRSF000161">
    <property type="entry name" value="DHPR"/>
    <property type="match status" value="1"/>
</dbReference>
<dbReference type="SUPFAM" id="SSF55347">
    <property type="entry name" value="Glyceraldehyde-3-phosphate dehydrogenase-like, C-terminal domain"/>
    <property type="match status" value="1"/>
</dbReference>
<dbReference type="SUPFAM" id="SSF51735">
    <property type="entry name" value="NAD(P)-binding Rossmann-fold domains"/>
    <property type="match status" value="1"/>
</dbReference>
<dbReference type="PROSITE" id="PS01298">
    <property type="entry name" value="DAPB"/>
    <property type="match status" value="1"/>
</dbReference>
<keyword id="KW-0028">Amino-acid biosynthesis</keyword>
<keyword id="KW-0963">Cytoplasm</keyword>
<keyword id="KW-0220">Diaminopimelate biosynthesis</keyword>
<keyword id="KW-0457">Lysine biosynthesis</keyword>
<keyword id="KW-0520">NAD</keyword>
<keyword id="KW-0521">NADP</keyword>
<keyword id="KW-0560">Oxidoreductase</keyword>
<keyword id="KW-1185">Reference proteome</keyword>
<name>DAPB_GLOC7</name>
<evidence type="ECO:0000255" key="1">
    <source>
        <dbReference type="HAMAP-Rule" id="MF_00102"/>
    </source>
</evidence>
<evidence type="ECO:0000305" key="2"/>
<sequence length="275" mass="29551">MTKESPIPVVVNGAAGKMGKEVIKAVSQAEDMMLVGAVDLNPKYRGEDAGEVAGCGPVEVPILDDLQSVLVLATQEKVQGVMVDFTHPDGVYDNIRSAIAYGVRPVVGTTGLSGEQIKDLGEFAEKASTGCLIVPNFSIGMILLQQAAVQASQYFDHVEIIELHHNQKADAPSGTAIKTAEMLSELGKSFNPAKVEETETIRGSRGGITEENIHIHSVRLPGFIAHQEVIFGSTGQIYTLRHDTTDRSSFMPGVLLAIRKVTQLKSLIYGLEKIL</sequence>
<organism>
    <name type="scientific">Gloeothece citriformis (strain PCC 7424)</name>
    <name type="common">Cyanothece sp. (strain PCC 7424)</name>
    <dbReference type="NCBI Taxonomy" id="65393"/>
    <lineage>
        <taxon>Bacteria</taxon>
        <taxon>Bacillati</taxon>
        <taxon>Cyanobacteriota</taxon>
        <taxon>Cyanophyceae</taxon>
        <taxon>Oscillatoriophycideae</taxon>
        <taxon>Chroococcales</taxon>
        <taxon>Aphanothecaceae</taxon>
        <taxon>Gloeothece</taxon>
        <taxon>Gloeothece citriformis</taxon>
    </lineage>
</organism>
<protein>
    <recommendedName>
        <fullName evidence="1">4-hydroxy-tetrahydrodipicolinate reductase</fullName>
        <shortName evidence="1">HTPA reductase</shortName>
        <ecNumber evidence="1">1.17.1.8</ecNumber>
    </recommendedName>
</protein>
<feature type="chain" id="PRO_1000117363" description="4-hydroxy-tetrahydrodipicolinate reductase">
    <location>
        <begin position="1"/>
        <end position="275"/>
    </location>
</feature>
<feature type="active site" description="Proton donor/acceptor" evidence="1">
    <location>
        <position position="164"/>
    </location>
</feature>
<feature type="active site" description="Proton donor" evidence="1">
    <location>
        <position position="168"/>
    </location>
</feature>
<feature type="binding site" evidence="1">
    <location>
        <begin position="13"/>
        <end position="18"/>
    </location>
    <ligand>
        <name>NAD(+)</name>
        <dbReference type="ChEBI" id="CHEBI:57540"/>
    </ligand>
</feature>
<feature type="binding site" evidence="1">
    <location>
        <begin position="108"/>
        <end position="110"/>
    </location>
    <ligand>
        <name>NAD(+)</name>
        <dbReference type="ChEBI" id="CHEBI:57540"/>
    </ligand>
</feature>
<feature type="binding site" evidence="1">
    <location>
        <begin position="134"/>
        <end position="137"/>
    </location>
    <ligand>
        <name>NAD(+)</name>
        <dbReference type="ChEBI" id="CHEBI:57540"/>
    </ligand>
</feature>
<feature type="binding site" evidence="1">
    <location>
        <position position="165"/>
    </location>
    <ligand>
        <name>(S)-2,3,4,5-tetrahydrodipicolinate</name>
        <dbReference type="ChEBI" id="CHEBI:16845"/>
    </ligand>
</feature>
<feature type="binding site" evidence="1">
    <location>
        <begin position="174"/>
        <end position="175"/>
    </location>
    <ligand>
        <name>(S)-2,3,4,5-tetrahydrodipicolinate</name>
        <dbReference type="ChEBI" id="CHEBI:16845"/>
    </ligand>
</feature>
<gene>
    <name evidence="1" type="primary">dapB</name>
    <name type="ordered locus">PCC7424_0311</name>
</gene>
<reference key="1">
    <citation type="journal article" date="2011" name="MBio">
        <title>Novel metabolic attributes of the genus Cyanothece, comprising a group of unicellular nitrogen-fixing Cyanobacteria.</title>
        <authorList>
            <person name="Bandyopadhyay A."/>
            <person name="Elvitigala T."/>
            <person name="Welsh E."/>
            <person name="Stockel J."/>
            <person name="Liberton M."/>
            <person name="Min H."/>
            <person name="Sherman L.A."/>
            <person name="Pakrasi H.B."/>
        </authorList>
    </citation>
    <scope>NUCLEOTIDE SEQUENCE [LARGE SCALE GENOMIC DNA]</scope>
    <source>
        <strain>PCC 7424</strain>
    </source>
</reference>
<comment type="function">
    <text evidence="1">Catalyzes the conversion of 4-hydroxy-tetrahydrodipicolinate (HTPA) to tetrahydrodipicolinate.</text>
</comment>
<comment type="catalytic activity">
    <reaction evidence="1">
        <text>(S)-2,3,4,5-tetrahydrodipicolinate + NAD(+) + H2O = (2S,4S)-4-hydroxy-2,3,4,5-tetrahydrodipicolinate + NADH + H(+)</text>
        <dbReference type="Rhea" id="RHEA:35323"/>
        <dbReference type="ChEBI" id="CHEBI:15377"/>
        <dbReference type="ChEBI" id="CHEBI:15378"/>
        <dbReference type="ChEBI" id="CHEBI:16845"/>
        <dbReference type="ChEBI" id="CHEBI:57540"/>
        <dbReference type="ChEBI" id="CHEBI:57945"/>
        <dbReference type="ChEBI" id="CHEBI:67139"/>
        <dbReference type="EC" id="1.17.1.8"/>
    </reaction>
</comment>
<comment type="catalytic activity">
    <reaction evidence="1">
        <text>(S)-2,3,4,5-tetrahydrodipicolinate + NADP(+) + H2O = (2S,4S)-4-hydroxy-2,3,4,5-tetrahydrodipicolinate + NADPH + H(+)</text>
        <dbReference type="Rhea" id="RHEA:35331"/>
        <dbReference type="ChEBI" id="CHEBI:15377"/>
        <dbReference type="ChEBI" id="CHEBI:15378"/>
        <dbReference type="ChEBI" id="CHEBI:16845"/>
        <dbReference type="ChEBI" id="CHEBI:57783"/>
        <dbReference type="ChEBI" id="CHEBI:58349"/>
        <dbReference type="ChEBI" id="CHEBI:67139"/>
        <dbReference type="EC" id="1.17.1.8"/>
    </reaction>
</comment>
<comment type="pathway">
    <text evidence="1">Amino-acid biosynthesis; L-lysine biosynthesis via DAP pathway; (S)-tetrahydrodipicolinate from L-aspartate: step 4/4.</text>
</comment>
<comment type="subcellular location">
    <subcellularLocation>
        <location evidence="1">Cytoplasm</location>
    </subcellularLocation>
</comment>
<comment type="similarity">
    <text evidence="1">Belongs to the DapB family.</text>
</comment>
<comment type="caution">
    <text evidence="2">Was originally thought to be a dihydrodipicolinate reductase (DHDPR), catalyzing the conversion of dihydrodipicolinate to tetrahydrodipicolinate. However, it was shown in E.coli that the substrate of the enzymatic reaction is not dihydrodipicolinate (DHDP) but in fact (2S,4S)-4-hydroxy-2,3,4,5-tetrahydrodipicolinic acid (HTPA), the product released by the DapA-catalyzed reaction.</text>
</comment>